<organism>
    <name type="scientific">Salmonella typhimurium (strain LT2 / SGSC1412 / ATCC 700720)</name>
    <dbReference type="NCBI Taxonomy" id="99287"/>
    <lineage>
        <taxon>Bacteria</taxon>
        <taxon>Pseudomonadati</taxon>
        <taxon>Pseudomonadota</taxon>
        <taxon>Gammaproteobacteria</taxon>
        <taxon>Enterobacterales</taxon>
        <taxon>Enterobacteriaceae</taxon>
        <taxon>Salmonella</taxon>
    </lineage>
</organism>
<sequence>MSQPLLAVNGLMMRFGGLLAVNNVSLELREREIVSLIGPNGAGKTTVFNCLTGFYKPTGGTITLRERHLEGLPGQQIARMGVVRTFQHVRLFREMTVIENLLVAQHQQLKTGLFSGLLKTPAFRRAQSEALDRAATWLERIGLLEHANRQASNLAYGDQRRLEIARCMVTQPEILMLDEPAAGLNPKETKELDELIAELRNHHNTTILLIEHDMKLVMGISDRIYVVNQGTPLANGTPEEIRNNPDVIRAYLGEA</sequence>
<name>LIVG_SALTY</name>
<reference key="1">
    <citation type="journal article" date="1992" name="J. Biochem.">
        <title>Nucleotide sequences and characterization of liv genes encoding components of the high-affinity branched-chain amino acid transport system in Salmonella typhimurium.</title>
        <authorList>
            <person name="Matsubara K."/>
            <person name="Ohnishi K."/>
            <person name="Kiritani K."/>
        </authorList>
    </citation>
    <scope>NUCLEOTIDE SEQUENCE [GENOMIC DNA]</scope>
    <source>
        <strain>LT2</strain>
    </source>
</reference>
<reference key="2">
    <citation type="journal article" date="2001" name="Nature">
        <title>Complete genome sequence of Salmonella enterica serovar Typhimurium LT2.</title>
        <authorList>
            <person name="McClelland M."/>
            <person name="Sanderson K.E."/>
            <person name="Spieth J."/>
            <person name="Clifton S.W."/>
            <person name="Latreille P."/>
            <person name="Courtney L."/>
            <person name="Porwollik S."/>
            <person name="Ali J."/>
            <person name="Dante M."/>
            <person name="Du F."/>
            <person name="Hou S."/>
            <person name="Layman D."/>
            <person name="Leonard S."/>
            <person name="Nguyen C."/>
            <person name="Scott K."/>
            <person name="Holmes A."/>
            <person name="Grewal N."/>
            <person name="Mulvaney E."/>
            <person name="Ryan E."/>
            <person name="Sun H."/>
            <person name="Florea L."/>
            <person name="Miller W."/>
            <person name="Stoneking T."/>
            <person name="Nhan M."/>
            <person name="Waterston R."/>
            <person name="Wilson R.K."/>
        </authorList>
    </citation>
    <scope>NUCLEOTIDE SEQUENCE [LARGE SCALE GENOMIC DNA]</scope>
    <source>
        <strain>LT2 / SGSC1412 / ATCC 700720</strain>
    </source>
</reference>
<dbReference type="EMBL" id="D12589">
    <property type="protein sequence ID" value="BAA02131.1"/>
    <property type="molecule type" value="Genomic_DNA"/>
</dbReference>
<dbReference type="EMBL" id="AE006468">
    <property type="protein sequence ID" value="AAL22421.1"/>
    <property type="molecule type" value="Genomic_DNA"/>
</dbReference>
<dbReference type="PIR" id="JH0670">
    <property type="entry name" value="JH0670"/>
</dbReference>
<dbReference type="RefSeq" id="NP_462462.1">
    <property type="nucleotide sequence ID" value="NC_003197.2"/>
</dbReference>
<dbReference type="RefSeq" id="WP_000082083.1">
    <property type="nucleotide sequence ID" value="NC_003197.2"/>
</dbReference>
<dbReference type="SMR" id="P0A193"/>
<dbReference type="STRING" id="99287.STM3561"/>
<dbReference type="PaxDb" id="99287-STM3561"/>
<dbReference type="GeneID" id="1255084"/>
<dbReference type="KEGG" id="stm:STM3561"/>
<dbReference type="PATRIC" id="fig|99287.12.peg.3764"/>
<dbReference type="HOGENOM" id="CLU_000604_1_2_6"/>
<dbReference type="OMA" id="EHDMRFI"/>
<dbReference type="PhylomeDB" id="P0A193"/>
<dbReference type="BioCyc" id="SENT99287:STM3561-MONOMER"/>
<dbReference type="Proteomes" id="UP000001014">
    <property type="component" value="Chromosome"/>
</dbReference>
<dbReference type="GO" id="GO:0005886">
    <property type="term" value="C:plasma membrane"/>
    <property type="evidence" value="ECO:0000318"/>
    <property type="project" value="GO_Central"/>
</dbReference>
<dbReference type="GO" id="GO:0005524">
    <property type="term" value="F:ATP binding"/>
    <property type="evidence" value="ECO:0007669"/>
    <property type="project" value="UniProtKB-KW"/>
</dbReference>
<dbReference type="GO" id="GO:0016887">
    <property type="term" value="F:ATP hydrolysis activity"/>
    <property type="evidence" value="ECO:0007669"/>
    <property type="project" value="InterPro"/>
</dbReference>
<dbReference type="GO" id="GO:0015188">
    <property type="term" value="F:L-isoleucine transmembrane transporter activity"/>
    <property type="evidence" value="ECO:0000318"/>
    <property type="project" value="GO_Central"/>
</dbReference>
<dbReference type="GO" id="GO:0015192">
    <property type="term" value="F:L-phenylalanine transmembrane transporter activity"/>
    <property type="evidence" value="ECO:0000318"/>
    <property type="project" value="GO_Central"/>
</dbReference>
<dbReference type="GO" id="GO:0005304">
    <property type="term" value="F:L-valine transmembrane transporter activity"/>
    <property type="evidence" value="ECO:0000318"/>
    <property type="project" value="GO_Central"/>
</dbReference>
<dbReference type="GO" id="GO:0042941">
    <property type="term" value="P:D-alanine transmembrane transport"/>
    <property type="evidence" value="ECO:0000318"/>
    <property type="project" value="GO_Central"/>
</dbReference>
<dbReference type="GO" id="GO:0015808">
    <property type="term" value="P:L-alanine transport"/>
    <property type="evidence" value="ECO:0000318"/>
    <property type="project" value="GO_Central"/>
</dbReference>
<dbReference type="GO" id="GO:1903806">
    <property type="term" value="P:L-isoleucine import across plasma membrane"/>
    <property type="evidence" value="ECO:0000318"/>
    <property type="project" value="GO_Central"/>
</dbReference>
<dbReference type="GO" id="GO:1903805">
    <property type="term" value="P:L-valine import across plasma membrane"/>
    <property type="evidence" value="ECO:0000318"/>
    <property type="project" value="GO_Central"/>
</dbReference>
<dbReference type="CDD" id="cd03219">
    <property type="entry name" value="ABC_Mj1267_LivG_branched"/>
    <property type="match status" value="1"/>
</dbReference>
<dbReference type="FunFam" id="3.40.50.300:FF:000317">
    <property type="entry name" value="Amino acid ABC transporter ATP-binding protein"/>
    <property type="match status" value="1"/>
</dbReference>
<dbReference type="Gene3D" id="3.40.50.300">
    <property type="entry name" value="P-loop containing nucleotide triphosphate hydrolases"/>
    <property type="match status" value="1"/>
</dbReference>
<dbReference type="InterPro" id="IPR003593">
    <property type="entry name" value="AAA+_ATPase"/>
</dbReference>
<dbReference type="InterPro" id="IPR051120">
    <property type="entry name" value="ABC_AA/LPS_Transport"/>
</dbReference>
<dbReference type="InterPro" id="IPR003439">
    <property type="entry name" value="ABC_transporter-like_ATP-bd"/>
</dbReference>
<dbReference type="InterPro" id="IPR017871">
    <property type="entry name" value="ABC_transporter-like_CS"/>
</dbReference>
<dbReference type="InterPro" id="IPR032823">
    <property type="entry name" value="BCA_ABC_TP_C"/>
</dbReference>
<dbReference type="InterPro" id="IPR027417">
    <property type="entry name" value="P-loop_NTPase"/>
</dbReference>
<dbReference type="NCBIfam" id="NF008449">
    <property type="entry name" value="PRK11300.1"/>
    <property type="match status" value="1"/>
</dbReference>
<dbReference type="PANTHER" id="PTHR45772">
    <property type="entry name" value="CONSERVED COMPONENT OF ABC TRANSPORTER FOR NATURAL AMINO ACIDS-RELATED"/>
    <property type="match status" value="1"/>
</dbReference>
<dbReference type="PANTHER" id="PTHR45772:SF11">
    <property type="entry name" value="HIGH-AFFINITY BRANCHED-CHAIN AMINO ACID TRANSPORT ATP-BINDING PROTEIN LIVG"/>
    <property type="match status" value="1"/>
</dbReference>
<dbReference type="Pfam" id="PF00005">
    <property type="entry name" value="ABC_tran"/>
    <property type="match status" value="1"/>
</dbReference>
<dbReference type="Pfam" id="PF12399">
    <property type="entry name" value="BCA_ABC_TP_C"/>
    <property type="match status" value="1"/>
</dbReference>
<dbReference type="SMART" id="SM00382">
    <property type="entry name" value="AAA"/>
    <property type="match status" value="1"/>
</dbReference>
<dbReference type="SUPFAM" id="SSF52540">
    <property type="entry name" value="P-loop containing nucleoside triphosphate hydrolases"/>
    <property type="match status" value="1"/>
</dbReference>
<dbReference type="PROSITE" id="PS00211">
    <property type="entry name" value="ABC_TRANSPORTER_1"/>
    <property type="match status" value="1"/>
</dbReference>
<dbReference type="PROSITE" id="PS50893">
    <property type="entry name" value="ABC_TRANSPORTER_2"/>
    <property type="match status" value="1"/>
</dbReference>
<protein>
    <recommendedName>
        <fullName>High-affinity branched-chain amino acid transport ATP-binding protein LivG</fullName>
    </recommendedName>
    <alternativeName>
        <fullName>LIV-I protein G</fullName>
    </alternativeName>
</protein>
<feature type="chain" id="PRO_0000092409" description="High-affinity branched-chain amino acid transport ATP-binding protein LivG">
    <location>
        <begin position="1"/>
        <end position="255"/>
    </location>
</feature>
<feature type="domain" description="ABC transporter" evidence="1">
    <location>
        <begin position="6"/>
        <end position="254"/>
    </location>
</feature>
<feature type="binding site" evidence="1">
    <location>
        <begin position="38"/>
        <end position="45"/>
    </location>
    <ligand>
        <name>ATP</name>
        <dbReference type="ChEBI" id="CHEBI:30616"/>
    </ligand>
</feature>
<accession>P0A193</accession>
<accession>P30293</accession>
<evidence type="ECO:0000255" key="1">
    <source>
        <dbReference type="PROSITE-ProRule" id="PRU00434"/>
    </source>
</evidence>
<evidence type="ECO:0000305" key="2"/>
<gene>
    <name type="primary">livG</name>
    <name type="synonym">livF</name>
    <name type="ordered locus">STM3561</name>
</gene>
<proteinExistence type="inferred from homology"/>
<keyword id="KW-0029">Amino-acid transport</keyword>
<keyword id="KW-0067">ATP-binding</keyword>
<keyword id="KW-0547">Nucleotide-binding</keyword>
<keyword id="KW-1185">Reference proteome</keyword>
<keyword id="KW-0813">Transport</keyword>
<comment type="function">
    <text>Component of the high-affinity branched-chain amino acid transport system.</text>
</comment>
<comment type="similarity">
    <text evidence="2">Belongs to the ABC transporter superfamily.</text>
</comment>
<comment type="caution">
    <text evidence="2">Called LivF in S.typhimurium, but we renamed it to LivG for the sake of consistency with the E.coli protein.</text>
</comment>